<feature type="chain" id="PRO_1000053120" description="Large ribosomal subunit protein uL18">
    <location>
        <begin position="1"/>
        <end position="118"/>
    </location>
</feature>
<feature type="region of interest" description="Disordered" evidence="2">
    <location>
        <begin position="1"/>
        <end position="25"/>
    </location>
</feature>
<feature type="compositionally biased region" description="Basic residues" evidence="2">
    <location>
        <begin position="10"/>
        <end position="20"/>
    </location>
</feature>
<dbReference type="EMBL" id="CP000410">
    <property type="protein sequence ID" value="ABJ54167.1"/>
    <property type="molecule type" value="Genomic_DNA"/>
</dbReference>
<dbReference type="RefSeq" id="WP_000624044.1">
    <property type="nucleotide sequence ID" value="NZ_JAMLJR010000002.1"/>
</dbReference>
<dbReference type="SMR" id="Q04MM0"/>
<dbReference type="PaxDb" id="373153-SPD_0209"/>
<dbReference type="GeneID" id="93738973"/>
<dbReference type="KEGG" id="spd:SPD_0209"/>
<dbReference type="eggNOG" id="COG0256">
    <property type="taxonomic scope" value="Bacteria"/>
</dbReference>
<dbReference type="HOGENOM" id="CLU_098841_0_1_9"/>
<dbReference type="BioCyc" id="SPNE373153:G1G6V-232-MONOMER"/>
<dbReference type="Proteomes" id="UP000001452">
    <property type="component" value="Chromosome"/>
</dbReference>
<dbReference type="GO" id="GO:0022625">
    <property type="term" value="C:cytosolic large ribosomal subunit"/>
    <property type="evidence" value="ECO:0007669"/>
    <property type="project" value="TreeGrafter"/>
</dbReference>
<dbReference type="GO" id="GO:0008097">
    <property type="term" value="F:5S rRNA binding"/>
    <property type="evidence" value="ECO:0007669"/>
    <property type="project" value="TreeGrafter"/>
</dbReference>
<dbReference type="GO" id="GO:0003735">
    <property type="term" value="F:structural constituent of ribosome"/>
    <property type="evidence" value="ECO:0007669"/>
    <property type="project" value="InterPro"/>
</dbReference>
<dbReference type="GO" id="GO:0006412">
    <property type="term" value="P:translation"/>
    <property type="evidence" value="ECO:0007669"/>
    <property type="project" value="UniProtKB-UniRule"/>
</dbReference>
<dbReference type="CDD" id="cd00432">
    <property type="entry name" value="Ribosomal_L18_L5e"/>
    <property type="match status" value="1"/>
</dbReference>
<dbReference type="FunFam" id="3.30.420.100:FF:000001">
    <property type="entry name" value="50S ribosomal protein L18"/>
    <property type="match status" value="1"/>
</dbReference>
<dbReference type="Gene3D" id="3.30.420.100">
    <property type="match status" value="1"/>
</dbReference>
<dbReference type="HAMAP" id="MF_01337_B">
    <property type="entry name" value="Ribosomal_uL18_B"/>
    <property type="match status" value="1"/>
</dbReference>
<dbReference type="InterPro" id="IPR004389">
    <property type="entry name" value="Ribosomal_uL18_bac-type"/>
</dbReference>
<dbReference type="InterPro" id="IPR005484">
    <property type="entry name" value="Ribosomal_uL18_bac/euk"/>
</dbReference>
<dbReference type="NCBIfam" id="TIGR00060">
    <property type="entry name" value="L18_bact"/>
    <property type="match status" value="1"/>
</dbReference>
<dbReference type="PANTHER" id="PTHR12899">
    <property type="entry name" value="39S RIBOSOMAL PROTEIN L18, MITOCHONDRIAL"/>
    <property type="match status" value="1"/>
</dbReference>
<dbReference type="PANTHER" id="PTHR12899:SF3">
    <property type="entry name" value="LARGE RIBOSOMAL SUBUNIT PROTEIN UL18M"/>
    <property type="match status" value="1"/>
</dbReference>
<dbReference type="Pfam" id="PF00861">
    <property type="entry name" value="Ribosomal_L18p"/>
    <property type="match status" value="1"/>
</dbReference>
<dbReference type="SUPFAM" id="SSF53137">
    <property type="entry name" value="Translational machinery components"/>
    <property type="match status" value="1"/>
</dbReference>
<reference key="1">
    <citation type="journal article" date="2007" name="J. Bacteriol.">
        <title>Genome sequence of Avery's virulent serotype 2 strain D39 of Streptococcus pneumoniae and comparison with that of unencapsulated laboratory strain R6.</title>
        <authorList>
            <person name="Lanie J.A."/>
            <person name="Ng W.-L."/>
            <person name="Kazmierczak K.M."/>
            <person name="Andrzejewski T.M."/>
            <person name="Davidsen T.M."/>
            <person name="Wayne K.J."/>
            <person name="Tettelin H."/>
            <person name="Glass J.I."/>
            <person name="Winkler M.E."/>
        </authorList>
    </citation>
    <scope>NUCLEOTIDE SEQUENCE [LARGE SCALE GENOMIC DNA]</scope>
    <source>
        <strain>D39 / NCTC 7466</strain>
    </source>
</reference>
<proteinExistence type="inferred from homology"/>
<gene>
    <name evidence="1" type="primary">rplR</name>
    <name type="ordered locus">SPD_0209</name>
</gene>
<sequence>MISKPDKNKLRQKRHRRVRGKLSGTADRPRLNVFRSNTGIYAQVIDDVAGVTLASASTLDKEVSKGTKTEQAVAVGKLVAERANAKGISEVVFDRGGYLYHGRVKALADAARENGLKF</sequence>
<organism>
    <name type="scientific">Streptococcus pneumoniae serotype 2 (strain D39 / NCTC 7466)</name>
    <dbReference type="NCBI Taxonomy" id="373153"/>
    <lineage>
        <taxon>Bacteria</taxon>
        <taxon>Bacillati</taxon>
        <taxon>Bacillota</taxon>
        <taxon>Bacilli</taxon>
        <taxon>Lactobacillales</taxon>
        <taxon>Streptococcaceae</taxon>
        <taxon>Streptococcus</taxon>
    </lineage>
</organism>
<keyword id="KW-1185">Reference proteome</keyword>
<keyword id="KW-0687">Ribonucleoprotein</keyword>
<keyword id="KW-0689">Ribosomal protein</keyword>
<keyword id="KW-0694">RNA-binding</keyword>
<keyword id="KW-0699">rRNA-binding</keyword>
<comment type="function">
    <text evidence="1">This is one of the proteins that bind and probably mediate the attachment of the 5S RNA into the large ribosomal subunit, where it forms part of the central protuberance.</text>
</comment>
<comment type="subunit">
    <text evidence="1">Part of the 50S ribosomal subunit; part of the 5S rRNA/L5/L18/L25 subcomplex. Contacts the 5S and 23S rRNAs.</text>
</comment>
<comment type="similarity">
    <text evidence="1">Belongs to the universal ribosomal protein uL18 family.</text>
</comment>
<accession>Q04MM0</accession>
<protein>
    <recommendedName>
        <fullName evidence="1">Large ribosomal subunit protein uL18</fullName>
    </recommendedName>
    <alternativeName>
        <fullName evidence="3">50S ribosomal protein L18</fullName>
    </alternativeName>
</protein>
<name>RL18_STRP2</name>
<evidence type="ECO:0000255" key="1">
    <source>
        <dbReference type="HAMAP-Rule" id="MF_01337"/>
    </source>
</evidence>
<evidence type="ECO:0000256" key="2">
    <source>
        <dbReference type="SAM" id="MobiDB-lite"/>
    </source>
</evidence>
<evidence type="ECO:0000305" key="3"/>